<reference key="1">
    <citation type="submission" date="2006-03" db="EMBL/GenBank/DDBJ databases">
        <title>Complete sequence of Rhodopseudomonas palustris BisB18.</title>
        <authorList>
            <consortium name="US DOE Joint Genome Institute"/>
            <person name="Copeland A."/>
            <person name="Lucas S."/>
            <person name="Lapidus A."/>
            <person name="Barry K."/>
            <person name="Detter J.C."/>
            <person name="Glavina del Rio T."/>
            <person name="Hammon N."/>
            <person name="Israni S."/>
            <person name="Dalin E."/>
            <person name="Tice H."/>
            <person name="Pitluck S."/>
            <person name="Chain P."/>
            <person name="Malfatti S."/>
            <person name="Shin M."/>
            <person name="Vergez L."/>
            <person name="Schmutz J."/>
            <person name="Larimer F."/>
            <person name="Land M."/>
            <person name="Hauser L."/>
            <person name="Pelletier D.A."/>
            <person name="Kyrpides N."/>
            <person name="Anderson I."/>
            <person name="Oda Y."/>
            <person name="Harwood C.S."/>
            <person name="Richardson P."/>
        </authorList>
    </citation>
    <scope>NUCLEOTIDE SEQUENCE [LARGE SCALE GENOMIC DNA]</scope>
    <source>
        <strain>BisB18</strain>
    </source>
</reference>
<gene>
    <name evidence="1" type="primary">hisA</name>
    <name type="ordered locus">RPC_0307</name>
</gene>
<name>HIS4_RHOPB</name>
<evidence type="ECO:0000255" key="1">
    <source>
        <dbReference type="HAMAP-Rule" id="MF_01014"/>
    </source>
</evidence>
<protein>
    <recommendedName>
        <fullName evidence="1">1-(5-phosphoribosyl)-5-[(5-phosphoribosylamino)methylideneamino] imidazole-4-carboxamide isomerase</fullName>
        <ecNumber evidence="1">5.3.1.16</ecNumber>
    </recommendedName>
    <alternativeName>
        <fullName evidence="1">Phosphoribosylformimino-5-aminoimidazole carboxamide ribotide isomerase</fullName>
    </alternativeName>
</protein>
<feature type="chain" id="PRO_0000290525" description="1-(5-phosphoribosyl)-5-[(5-phosphoribosylamino)methylideneamino] imidazole-4-carboxamide isomerase">
    <location>
        <begin position="1"/>
        <end position="245"/>
    </location>
</feature>
<feature type="active site" description="Proton acceptor" evidence="1">
    <location>
        <position position="8"/>
    </location>
</feature>
<feature type="active site" description="Proton donor" evidence="1">
    <location>
        <position position="129"/>
    </location>
</feature>
<organism>
    <name type="scientific">Rhodopseudomonas palustris (strain BisB18)</name>
    <dbReference type="NCBI Taxonomy" id="316056"/>
    <lineage>
        <taxon>Bacteria</taxon>
        <taxon>Pseudomonadati</taxon>
        <taxon>Pseudomonadota</taxon>
        <taxon>Alphaproteobacteria</taxon>
        <taxon>Hyphomicrobiales</taxon>
        <taxon>Nitrobacteraceae</taxon>
        <taxon>Rhodopseudomonas</taxon>
    </lineage>
</organism>
<proteinExistence type="inferred from homology"/>
<dbReference type="EC" id="5.3.1.16" evidence="1"/>
<dbReference type="EMBL" id="CP000301">
    <property type="protein sequence ID" value="ABD85882.1"/>
    <property type="molecule type" value="Genomic_DNA"/>
</dbReference>
<dbReference type="SMR" id="Q21CK4"/>
<dbReference type="STRING" id="316056.RPC_0307"/>
<dbReference type="KEGG" id="rpc:RPC_0307"/>
<dbReference type="eggNOG" id="COG0106">
    <property type="taxonomic scope" value="Bacteria"/>
</dbReference>
<dbReference type="HOGENOM" id="CLU_048577_1_1_5"/>
<dbReference type="OrthoDB" id="9807749at2"/>
<dbReference type="UniPathway" id="UPA00031">
    <property type="reaction ID" value="UER00009"/>
</dbReference>
<dbReference type="GO" id="GO:0005737">
    <property type="term" value="C:cytoplasm"/>
    <property type="evidence" value="ECO:0007669"/>
    <property type="project" value="UniProtKB-SubCell"/>
</dbReference>
<dbReference type="GO" id="GO:0003949">
    <property type="term" value="F:1-(5-phosphoribosyl)-5-[(5-phosphoribosylamino)methylideneamino]imidazole-4-carboxamide isomerase activity"/>
    <property type="evidence" value="ECO:0007669"/>
    <property type="project" value="UniProtKB-UniRule"/>
</dbReference>
<dbReference type="GO" id="GO:0000105">
    <property type="term" value="P:L-histidine biosynthetic process"/>
    <property type="evidence" value="ECO:0007669"/>
    <property type="project" value="UniProtKB-UniRule"/>
</dbReference>
<dbReference type="GO" id="GO:0000162">
    <property type="term" value="P:L-tryptophan biosynthetic process"/>
    <property type="evidence" value="ECO:0007669"/>
    <property type="project" value="TreeGrafter"/>
</dbReference>
<dbReference type="CDD" id="cd04732">
    <property type="entry name" value="HisA"/>
    <property type="match status" value="1"/>
</dbReference>
<dbReference type="FunFam" id="3.20.20.70:FF:000009">
    <property type="entry name" value="1-(5-phosphoribosyl)-5-[(5-phosphoribosylamino)methylideneamino] imidazole-4-carboxamide isomerase"/>
    <property type="match status" value="1"/>
</dbReference>
<dbReference type="Gene3D" id="3.20.20.70">
    <property type="entry name" value="Aldolase class I"/>
    <property type="match status" value="1"/>
</dbReference>
<dbReference type="HAMAP" id="MF_01014">
    <property type="entry name" value="HisA"/>
    <property type="match status" value="1"/>
</dbReference>
<dbReference type="InterPro" id="IPR013785">
    <property type="entry name" value="Aldolase_TIM"/>
</dbReference>
<dbReference type="InterPro" id="IPR006062">
    <property type="entry name" value="His_biosynth"/>
</dbReference>
<dbReference type="InterPro" id="IPR006063">
    <property type="entry name" value="HisA_bact_arch"/>
</dbReference>
<dbReference type="InterPro" id="IPR044524">
    <property type="entry name" value="Isoase_HisA-like"/>
</dbReference>
<dbReference type="InterPro" id="IPR023016">
    <property type="entry name" value="Isoase_HisA-like_bact"/>
</dbReference>
<dbReference type="InterPro" id="IPR011060">
    <property type="entry name" value="RibuloseP-bd_barrel"/>
</dbReference>
<dbReference type="NCBIfam" id="TIGR00007">
    <property type="entry name" value="1-(5-phosphoribosyl)-5-[(5-phosphoribosylamino)methylideneamino]imidazole-4-carboxamide isomerase"/>
    <property type="match status" value="1"/>
</dbReference>
<dbReference type="NCBIfam" id="NF010112">
    <property type="entry name" value="PRK13585.1"/>
    <property type="match status" value="1"/>
</dbReference>
<dbReference type="PANTHER" id="PTHR43090">
    <property type="entry name" value="1-(5-PHOSPHORIBOSYL)-5-[(5-PHOSPHORIBOSYLAMINO)METHYLIDENEAMINO] IMIDAZOLE-4-CARBOXAMIDE ISOMERASE"/>
    <property type="match status" value="1"/>
</dbReference>
<dbReference type="PANTHER" id="PTHR43090:SF2">
    <property type="entry name" value="1-(5-PHOSPHORIBOSYL)-5-[(5-PHOSPHORIBOSYLAMINO)METHYLIDENEAMINO] IMIDAZOLE-4-CARBOXAMIDE ISOMERASE"/>
    <property type="match status" value="1"/>
</dbReference>
<dbReference type="Pfam" id="PF00977">
    <property type="entry name" value="His_biosynth"/>
    <property type="match status" value="1"/>
</dbReference>
<dbReference type="SUPFAM" id="SSF51366">
    <property type="entry name" value="Ribulose-phoshate binding barrel"/>
    <property type="match status" value="1"/>
</dbReference>
<accession>Q21CK4</accession>
<keyword id="KW-0028">Amino-acid biosynthesis</keyword>
<keyword id="KW-0963">Cytoplasm</keyword>
<keyword id="KW-0368">Histidine biosynthesis</keyword>
<keyword id="KW-0413">Isomerase</keyword>
<comment type="catalytic activity">
    <reaction evidence="1">
        <text>1-(5-phospho-beta-D-ribosyl)-5-[(5-phospho-beta-D-ribosylamino)methylideneamino]imidazole-4-carboxamide = 5-[(5-phospho-1-deoxy-D-ribulos-1-ylimino)methylamino]-1-(5-phospho-beta-D-ribosyl)imidazole-4-carboxamide</text>
        <dbReference type="Rhea" id="RHEA:15469"/>
        <dbReference type="ChEBI" id="CHEBI:58435"/>
        <dbReference type="ChEBI" id="CHEBI:58525"/>
        <dbReference type="EC" id="5.3.1.16"/>
    </reaction>
</comment>
<comment type="pathway">
    <text evidence="1">Amino-acid biosynthesis; L-histidine biosynthesis; L-histidine from 5-phospho-alpha-D-ribose 1-diphosphate: step 4/9.</text>
</comment>
<comment type="subcellular location">
    <subcellularLocation>
        <location evidence="1">Cytoplasm</location>
    </subcellularLocation>
</comment>
<comment type="similarity">
    <text evidence="1">Belongs to the HisA/HisF family.</text>
</comment>
<sequence>MILFPAIDLKNGQCVRLEQGDMDRATVFNLDPAAQAKSFAAQGFEYLHVVDLDGAFAGKPMNAQAVESMLQVVKMPVQLGGGIRDLATIEAWLGKGVSRVIIGTAAVRDPALVKDAAKKFPGRVAVGLDARDGKVAVQGWAESSEVTALEIAQRFEDAGVAAIIFTDIARDGLLKGLNLDATIELAATISTPVIASGGFGSIDDVKALILPRAAKLAGAIVGRALYDGRLDPTEALALMRRAAAA</sequence>